<reference key="1">
    <citation type="journal article" date="2010" name="J. Bacteriol.">
        <title>The genetic basis of laboratory adaptation in Caulobacter crescentus.</title>
        <authorList>
            <person name="Marks M.E."/>
            <person name="Castro-Rojas C.M."/>
            <person name="Teiling C."/>
            <person name="Du L."/>
            <person name="Kapatral V."/>
            <person name="Walunas T.L."/>
            <person name="Crosson S."/>
        </authorList>
    </citation>
    <scope>NUCLEOTIDE SEQUENCE [LARGE SCALE GENOMIC DNA]</scope>
    <source>
        <strain>NA1000 / CB15N</strain>
    </source>
</reference>
<accession>B8GVX4</accession>
<evidence type="ECO:0000250" key="1"/>
<evidence type="ECO:0000255" key="2">
    <source>
        <dbReference type="HAMAP-Rule" id="MF_01676"/>
    </source>
</evidence>
<proteinExistence type="inferred from homology"/>
<gene>
    <name evidence="2" type="primary">ahpD</name>
    <name type="ordered locus">CCNA_03812</name>
</gene>
<sequence>MSIEALRARLPDYAHDLGTNLALLVDDPALDPEARWGCFVASACAVGEPQTLRAIDAAATAAGLTAEANRAARKAAAMMAMTNVYFRAVHLMEGAAYQALPCRLRLNRLAHAGARGVTYDLSCVAVSAINGCGACLDSHEADLRGRGVEPTQIQAALRIAAVVSAVARTLAAEAALHPQNLEI</sequence>
<organism>
    <name type="scientific">Caulobacter vibrioides (strain NA1000 / CB15N)</name>
    <name type="common">Caulobacter crescentus</name>
    <dbReference type="NCBI Taxonomy" id="565050"/>
    <lineage>
        <taxon>Bacteria</taxon>
        <taxon>Pseudomonadati</taxon>
        <taxon>Pseudomonadota</taxon>
        <taxon>Alphaproteobacteria</taxon>
        <taxon>Caulobacterales</taxon>
        <taxon>Caulobacteraceae</taxon>
        <taxon>Caulobacter</taxon>
    </lineage>
</organism>
<name>AHPD_CAUVN</name>
<protein>
    <recommendedName>
        <fullName evidence="2">Alkyl hydroperoxide reductase AhpD</fullName>
        <ecNumber evidence="2">1.11.1.28</ecNumber>
    </recommendedName>
    <alternativeName>
        <fullName evidence="2">Alkylhydroperoxidase AhpD</fullName>
    </alternativeName>
</protein>
<comment type="function">
    <text evidence="2">Antioxidant protein with alkyl hydroperoxidase activity. Required for the reduction of the AhpC active site cysteine residues and for the regeneration of the AhpC enzyme activity.</text>
</comment>
<comment type="catalytic activity">
    <reaction evidence="2">
        <text>N(6)-[(R)-dihydrolipoyl]-L-lysyl-[lipoyl-carrier protein] + a hydroperoxide = N(6)-[(R)-lipoyl]-L-lysyl-[lipoyl-carrier protein] + an alcohol + H2O</text>
        <dbReference type="Rhea" id="RHEA:62636"/>
        <dbReference type="Rhea" id="RHEA-COMP:10502"/>
        <dbReference type="Rhea" id="RHEA-COMP:16355"/>
        <dbReference type="ChEBI" id="CHEBI:15377"/>
        <dbReference type="ChEBI" id="CHEBI:30879"/>
        <dbReference type="ChEBI" id="CHEBI:35924"/>
        <dbReference type="ChEBI" id="CHEBI:83099"/>
        <dbReference type="ChEBI" id="CHEBI:83100"/>
        <dbReference type="EC" id="1.11.1.28"/>
    </reaction>
</comment>
<comment type="similarity">
    <text evidence="2">Belongs to the AhpD family.</text>
</comment>
<feature type="chain" id="PRO_1000187333" description="Alkyl hydroperoxide reductase AhpD">
    <location>
        <begin position="1"/>
        <end position="183"/>
    </location>
</feature>
<feature type="active site" description="Proton donor" evidence="2">
    <location>
        <position position="132"/>
    </location>
</feature>
<feature type="active site" description="Cysteine sulfenic acid (-SOH) intermediate" evidence="2">
    <location>
        <position position="135"/>
    </location>
</feature>
<feature type="disulfide bond" evidence="1">
    <location>
        <begin position="132"/>
        <end position="135"/>
    </location>
</feature>
<feature type="disulfide bond" description="Interchain (with AhpC); in linked form" evidence="2">
    <location>
        <position position="135"/>
    </location>
</feature>
<keyword id="KW-0049">Antioxidant</keyword>
<keyword id="KW-1015">Disulfide bond</keyword>
<keyword id="KW-0560">Oxidoreductase</keyword>
<keyword id="KW-0575">Peroxidase</keyword>
<keyword id="KW-0676">Redox-active center</keyword>
<keyword id="KW-1185">Reference proteome</keyword>
<dbReference type="EC" id="1.11.1.28" evidence="2"/>
<dbReference type="EMBL" id="CP001340">
    <property type="protein sequence ID" value="ACL97277.1"/>
    <property type="molecule type" value="Genomic_DNA"/>
</dbReference>
<dbReference type="RefSeq" id="WP_010921525.1">
    <property type="nucleotide sequence ID" value="NC_011916.1"/>
</dbReference>
<dbReference type="RefSeq" id="YP_002519185.1">
    <property type="nucleotide sequence ID" value="NC_011916.1"/>
</dbReference>
<dbReference type="SMR" id="B8GVX4"/>
<dbReference type="GeneID" id="7332010"/>
<dbReference type="KEGG" id="ccs:CCNA_03812"/>
<dbReference type="PATRIC" id="fig|565050.3.peg.3716"/>
<dbReference type="HOGENOM" id="CLU_105328_0_0_5"/>
<dbReference type="OrthoDB" id="9801997at2"/>
<dbReference type="PhylomeDB" id="B8GVX4"/>
<dbReference type="Proteomes" id="UP000001364">
    <property type="component" value="Chromosome"/>
</dbReference>
<dbReference type="GO" id="GO:0008785">
    <property type="term" value="F:alkyl hydroperoxide reductase activity"/>
    <property type="evidence" value="ECO:0007669"/>
    <property type="project" value="UniProtKB-UniRule"/>
</dbReference>
<dbReference type="GO" id="GO:0032843">
    <property type="term" value="F:hydroperoxide reductase activity"/>
    <property type="evidence" value="ECO:0007669"/>
    <property type="project" value="InterPro"/>
</dbReference>
<dbReference type="GO" id="GO:0051920">
    <property type="term" value="F:peroxiredoxin activity"/>
    <property type="evidence" value="ECO:0007669"/>
    <property type="project" value="InterPro"/>
</dbReference>
<dbReference type="GO" id="GO:0006979">
    <property type="term" value="P:response to oxidative stress"/>
    <property type="evidence" value="ECO:0007669"/>
    <property type="project" value="InterPro"/>
</dbReference>
<dbReference type="Gene3D" id="1.20.1290.10">
    <property type="entry name" value="AhpD-like"/>
    <property type="match status" value="1"/>
</dbReference>
<dbReference type="HAMAP" id="MF_01676">
    <property type="entry name" value="AhpD"/>
    <property type="match status" value="1"/>
</dbReference>
<dbReference type="InterPro" id="IPR004674">
    <property type="entry name" value="AhpD"/>
</dbReference>
<dbReference type="InterPro" id="IPR029032">
    <property type="entry name" value="AhpD-like"/>
</dbReference>
<dbReference type="InterPro" id="IPR004675">
    <property type="entry name" value="AhpD_core"/>
</dbReference>
<dbReference type="InterPro" id="IPR003779">
    <property type="entry name" value="CMD-like"/>
</dbReference>
<dbReference type="NCBIfam" id="TIGR00777">
    <property type="entry name" value="ahpD"/>
    <property type="match status" value="1"/>
</dbReference>
<dbReference type="NCBIfam" id="TIGR00778">
    <property type="entry name" value="ahpD_dom"/>
    <property type="match status" value="1"/>
</dbReference>
<dbReference type="Pfam" id="PF02627">
    <property type="entry name" value="CMD"/>
    <property type="match status" value="1"/>
</dbReference>
<dbReference type="SUPFAM" id="SSF69118">
    <property type="entry name" value="AhpD-like"/>
    <property type="match status" value="1"/>
</dbReference>